<protein>
    <recommendedName>
        <fullName>Curli production assembly/transport component CsgG</fullName>
    </recommendedName>
</protein>
<organism>
    <name type="scientific">Escherichia coli O6:H1 (strain CFT073 / ATCC 700928 / UPEC)</name>
    <dbReference type="NCBI Taxonomy" id="199310"/>
    <lineage>
        <taxon>Bacteria</taxon>
        <taxon>Pseudomonadati</taxon>
        <taxon>Pseudomonadota</taxon>
        <taxon>Gammaproteobacteria</taxon>
        <taxon>Enterobacterales</taxon>
        <taxon>Enterobacteriaceae</taxon>
        <taxon>Escherichia</taxon>
    </lineage>
</organism>
<keyword id="KW-1003">Cell membrane</keyword>
<keyword id="KW-0449">Lipoprotein</keyword>
<keyword id="KW-0472">Membrane</keyword>
<keyword id="KW-0564">Palmitate</keyword>
<keyword id="KW-1185">Reference proteome</keyword>
<keyword id="KW-0732">Signal</keyword>
<feature type="signal peptide" evidence="2">
    <location>
        <begin position="1"/>
        <end position="15"/>
    </location>
</feature>
<feature type="chain" id="PRO_0000043390" description="Curli production assembly/transport component CsgG">
    <location>
        <begin position="16"/>
        <end position="277"/>
    </location>
</feature>
<feature type="lipid moiety-binding region" description="N-palmitoyl cysteine" evidence="2">
    <location>
        <position position="16"/>
    </location>
</feature>
<feature type="lipid moiety-binding region" description="S-diacylglycerol cysteine" evidence="2">
    <location>
        <position position="16"/>
    </location>
</feature>
<sequence>MQRLFLLVAVMLLSGCLTAPPKEAARPTLMPRAQSYKDLTHLPAPTGKIFVSVYNIQDETGQFKPYPASNFSTAVPQSATAMLVTALKDSRWFIPLERQGLQNLLNERKIIRAAQENGTVAINNRIPLQSLTAANIMVEGSIIGYESNVKSGGVGARYFGIGADTQYQLDQIAVNLRVVNVSTGEILSSVNTSKTILSYEVQAGVFRFIDYQRLLEGEVGYTSNEPVMLCLMSAIETGVIFLINDGIDRGLWDLQNKAERQNDILVKYRHMSVPPES</sequence>
<proteinExistence type="inferred from homology"/>
<gene>
    <name type="primary">csgG</name>
    <name type="ordered locus">c1299</name>
</gene>
<accession>P0AEA3</accession>
<accession>P52103</accession>
<reference key="1">
    <citation type="journal article" date="2002" name="Proc. Natl. Acad. Sci. U.S.A.">
        <title>Extensive mosaic structure revealed by the complete genome sequence of uropathogenic Escherichia coli.</title>
        <authorList>
            <person name="Welch R.A."/>
            <person name="Burland V."/>
            <person name="Plunkett G. III"/>
            <person name="Redford P."/>
            <person name="Roesch P."/>
            <person name="Rasko D."/>
            <person name="Buckles E.L."/>
            <person name="Liou S.-R."/>
            <person name="Boutin A."/>
            <person name="Hackett J."/>
            <person name="Stroud D."/>
            <person name="Mayhew G.F."/>
            <person name="Rose D.J."/>
            <person name="Zhou S."/>
            <person name="Schwartz D.C."/>
            <person name="Perna N.T."/>
            <person name="Mobley H.L.T."/>
            <person name="Donnenberg M.S."/>
            <person name="Blattner F.R."/>
        </authorList>
    </citation>
    <scope>NUCLEOTIDE SEQUENCE [LARGE SCALE GENOMIC DNA]</scope>
    <source>
        <strain>CFT073 / ATCC 700928 / UPEC</strain>
    </source>
</reference>
<comment type="function">
    <text evidence="1">May be involved in the biogenesis of curli organelles.</text>
</comment>
<comment type="subcellular location">
    <subcellularLocation>
        <location evidence="2">Cell membrane</location>
        <topology evidence="2">Lipid-anchor</topology>
    </subcellularLocation>
</comment>
<comment type="similarity">
    <text evidence="3">Belongs to the CsgG family.</text>
</comment>
<dbReference type="EMBL" id="AE014075">
    <property type="protein sequence ID" value="AAN79772.1"/>
    <property type="molecule type" value="Genomic_DNA"/>
</dbReference>
<dbReference type="RefSeq" id="WP_001189321.1">
    <property type="nucleotide sequence ID" value="NZ_CP051263.1"/>
</dbReference>
<dbReference type="SMR" id="P0AEA3"/>
<dbReference type="STRING" id="199310.c1299"/>
<dbReference type="GeneID" id="75203625"/>
<dbReference type="KEGG" id="ecc:c1299"/>
<dbReference type="eggNOG" id="COG1462">
    <property type="taxonomic scope" value="Bacteria"/>
</dbReference>
<dbReference type="HOGENOM" id="CLU_056911_0_0_6"/>
<dbReference type="BioCyc" id="ECOL199310:C1299-MONOMER"/>
<dbReference type="Proteomes" id="UP000001410">
    <property type="component" value="Chromosome"/>
</dbReference>
<dbReference type="GO" id="GO:0030288">
    <property type="term" value="C:outer membrane-bounded periplasmic space"/>
    <property type="evidence" value="ECO:0007669"/>
    <property type="project" value="InterPro"/>
</dbReference>
<dbReference type="GO" id="GO:0005886">
    <property type="term" value="C:plasma membrane"/>
    <property type="evidence" value="ECO:0007669"/>
    <property type="project" value="UniProtKB-SubCell"/>
</dbReference>
<dbReference type="FunFam" id="3.40.50.10610:FF:000001">
    <property type="entry name" value="Curli production assembly/transport component CsgG"/>
    <property type="match status" value="1"/>
</dbReference>
<dbReference type="FunFam" id="3.40.50.10610:FF:000003">
    <property type="entry name" value="Curli production assembly/transport component CsgG"/>
    <property type="match status" value="1"/>
</dbReference>
<dbReference type="Gene3D" id="3.40.50.10610">
    <property type="entry name" value="ABC-type transport auxiliary lipoprotein component"/>
    <property type="match status" value="2"/>
</dbReference>
<dbReference type="InterPro" id="IPR005534">
    <property type="entry name" value="Curli_assmbl/transp-comp_CsgG"/>
</dbReference>
<dbReference type="NCBIfam" id="NF011731">
    <property type="entry name" value="PRK15184.1"/>
    <property type="match status" value="1"/>
</dbReference>
<dbReference type="PANTHER" id="PTHR41164">
    <property type="entry name" value="CURLI PRODUCTION ASSEMBLY/TRANSPORT COMPONENT CSGG"/>
    <property type="match status" value="1"/>
</dbReference>
<dbReference type="PANTHER" id="PTHR41164:SF1">
    <property type="entry name" value="CURLI PRODUCTION ASSEMBLY_TRANSPORT COMPONENT CSGG"/>
    <property type="match status" value="1"/>
</dbReference>
<dbReference type="Pfam" id="PF03783">
    <property type="entry name" value="CsgG"/>
    <property type="match status" value="1"/>
</dbReference>
<dbReference type="PROSITE" id="PS51257">
    <property type="entry name" value="PROKAR_LIPOPROTEIN"/>
    <property type="match status" value="1"/>
</dbReference>
<name>CSGG_ECOL6</name>
<evidence type="ECO:0000250" key="1"/>
<evidence type="ECO:0000255" key="2">
    <source>
        <dbReference type="PROSITE-ProRule" id="PRU00303"/>
    </source>
</evidence>
<evidence type="ECO:0000305" key="3"/>